<evidence type="ECO:0000250" key="1"/>
<evidence type="ECO:0000305" key="2"/>
<feature type="chain" id="PRO_0000391962" description="Ubiquitin-fold modifier-conjugating enzyme 1">
    <location>
        <begin position="1"/>
        <end position="165"/>
    </location>
</feature>
<feature type="active site" description="Glycyl thioester intermediate" evidence="1">
    <location>
        <position position="117"/>
    </location>
</feature>
<organism>
    <name type="scientific">Brugia malayi</name>
    <name type="common">Filarial nematode worm</name>
    <dbReference type="NCBI Taxonomy" id="6279"/>
    <lineage>
        <taxon>Eukaryota</taxon>
        <taxon>Metazoa</taxon>
        <taxon>Ecdysozoa</taxon>
        <taxon>Nematoda</taxon>
        <taxon>Chromadorea</taxon>
        <taxon>Rhabditida</taxon>
        <taxon>Spirurina</taxon>
        <taxon>Spiruromorpha</taxon>
        <taxon>Filarioidea</taxon>
        <taxon>Onchocercidae</taxon>
        <taxon>Brugia</taxon>
    </lineage>
</organism>
<proteinExistence type="inferred from homology"/>
<sequence>MELSESTKKALKAIPLMRTKAGPRDGDSWVQRLKEEYEALIAFINNNKAADLDWFRLESNSDGTRWFGKCWHYHNMLRYEFDVEFDIPVTYPTTAPEIALPELDGKTAKMYRGGRICLSDHFKPLWARNVPKFGIAQAFSLGLGPWLAVEVPDLVDRGMIQPKTA</sequence>
<comment type="function">
    <text evidence="1">E2-like enzyme which forms an intermediate with UFM1 via a thioester linkage.</text>
</comment>
<comment type="similarity">
    <text evidence="2">Belongs to the ubiquitin-conjugating enzyme family. UFC1 subfamily.</text>
</comment>
<protein>
    <recommendedName>
        <fullName>Ubiquitin-fold modifier-conjugating enzyme 1</fullName>
    </recommendedName>
    <alternativeName>
        <fullName>Ufm1-conjugating enzyme 1</fullName>
    </alternativeName>
</protein>
<accession>A8Q8J2</accession>
<reference key="1">
    <citation type="journal article" date="2007" name="Science">
        <title>Draft genome of the filarial nematode parasite Brugia malayi.</title>
        <authorList>
            <person name="Ghedin E."/>
            <person name="Wang S."/>
            <person name="Spiro D."/>
            <person name="Caler E."/>
            <person name="Zhao Q."/>
            <person name="Crabtree J."/>
            <person name="Allen J.E."/>
            <person name="Delcher A.L."/>
            <person name="Guiliano D.B."/>
            <person name="Miranda-Saavedra D."/>
            <person name="Angiuoli S.V."/>
            <person name="Creasy T."/>
            <person name="Amedeo P."/>
            <person name="Haas B."/>
            <person name="El-Sayed N.M."/>
            <person name="Wortman J.R."/>
            <person name="Feldblyum T."/>
            <person name="Tallon L."/>
            <person name="Schatz M."/>
            <person name="Shumway M."/>
            <person name="Koo H."/>
            <person name="Salzberg S.L."/>
            <person name="Schobel S."/>
            <person name="Pertea M."/>
            <person name="Pop M."/>
            <person name="White O."/>
            <person name="Barton G.J."/>
            <person name="Carlow C.K.S."/>
            <person name="Crawford M.J."/>
            <person name="Daub J."/>
            <person name="Dimmic M.W."/>
            <person name="Estes C.F."/>
            <person name="Foster J.M."/>
            <person name="Ganatra M."/>
            <person name="Gregory W.F."/>
            <person name="Johnson N.M."/>
            <person name="Jin J."/>
            <person name="Komuniecki R."/>
            <person name="Korf I."/>
            <person name="Kumar S."/>
            <person name="Laney S."/>
            <person name="Li B.-W."/>
            <person name="Li W."/>
            <person name="Lindblom T.H."/>
            <person name="Lustigman S."/>
            <person name="Ma D."/>
            <person name="Maina C.V."/>
            <person name="Martin D.M."/>
            <person name="McCarter J.P."/>
            <person name="McReynolds L."/>
            <person name="Mitreva M."/>
            <person name="Nutman T.B."/>
            <person name="Parkinson J."/>
            <person name="Peregrin-Alvarez J.M."/>
            <person name="Poole C."/>
            <person name="Ren Q."/>
            <person name="Saunders L."/>
            <person name="Sluder A.E."/>
            <person name="Smith K."/>
            <person name="Stanke M."/>
            <person name="Unnasch T.R."/>
            <person name="Ware J."/>
            <person name="Wei A.D."/>
            <person name="Weil G."/>
            <person name="Williams D.J."/>
            <person name="Zhang Y."/>
            <person name="Williams S.A."/>
            <person name="Fraser-Liggett C."/>
            <person name="Slatko B."/>
            <person name="Blaxter M.L."/>
            <person name="Scott A.L."/>
        </authorList>
    </citation>
    <scope>NUCLEOTIDE SEQUENCE [LARGE SCALE GENOMIC DNA]</scope>
</reference>
<keyword id="KW-1185">Reference proteome</keyword>
<keyword id="KW-0833">Ubl conjugation pathway</keyword>
<name>UFC1_BRUMA</name>
<dbReference type="EMBL" id="DS239419">
    <property type="protein sequence ID" value="EDP30455.1"/>
    <property type="molecule type" value="Genomic_DNA"/>
</dbReference>
<dbReference type="SMR" id="A8Q8J2"/>
<dbReference type="FunCoup" id="A8Q8J2">
    <property type="interactions" value="1742"/>
</dbReference>
<dbReference type="STRING" id="6279.A8Q8J2"/>
<dbReference type="EnsemblMetazoa" id="Bm2685.1">
    <property type="protein sequence ID" value="Bm2685.1"/>
    <property type="gene ID" value="WBGene00222946"/>
</dbReference>
<dbReference type="GeneID" id="6104120"/>
<dbReference type="KEGG" id="bmy:BM_BM2685"/>
<dbReference type="CTD" id="6104120"/>
<dbReference type="WormBase" id="Bm2685">
    <property type="protein sequence ID" value="BM30868"/>
    <property type="gene ID" value="WBGene00222946"/>
    <property type="gene designation" value="Bma-ufc-1"/>
</dbReference>
<dbReference type="HOGENOM" id="CLU_101170_0_0_1"/>
<dbReference type="InParanoid" id="A8Q8J2"/>
<dbReference type="OMA" id="LWQKNVP"/>
<dbReference type="OrthoDB" id="10256182at2759"/>
<dbReference type="Proteomes" id="UP000006672">
    <property type="component" value="Unassembled WGS sequence"/>
</dbReference>
<dbReference type="GO" id="GO:0005737">
    <property type="term" value="C:cytoplasm"/>
    <property type="evidence" value="ECO:0007669"/>
    <property type="project" value="TreeGrafter"/>
</dbReference>
<dbReference type="GO" id="GO:0031624">
    <property type="term" value="F:ubiquitin conjugating enzyme binding"/>
    <property type="evidence" value="ECO:0007669"/>
    <property type="project" value="EnsemblMetazoa"/>
</dbReference>
<dbReference type="GO" id="GO:0061657">
    <property type="term" value="F:UFM1 conjugating enzyme activity"/>
    <property type="evidence" value="ECO:0007669"/>
    <property type="project" value="InterPro"/>
</dbReference>
<dbReference type="GO" id="GO:1990592">
    <property type="term" value="P:protein K69-linked ufmylation"/>
    <property type="evidence" value="ECO:0007669"/>
    <property type="project" value="TreeGrafter"/>
</dbReference>
<dbReference type="CDD" id="cd11686">
    <property type="entry name" value="UBCc_UFC1"/>
    <property type="match status" value="1"/>
</dbReference>
<dbReference type="Gene3D" id="3.10.110.10">
    <property type="entry name" value="Ubiquitin Conjugating Enzyme"/>
    <property type="match status" value="1"/>
</dbReference>
<dbReference type="InterPro" id="IPR016135">
    <property type="entry name" value="UBQ-conjugating_enzyme/RWD"/>
</dbReference>
<dbReference type="InterPro" id="IPR014806">
    <property type="entry name" value="Ufc1"/>
</dbReference>
<dbReference type="PANTHER" id="PTHR12921">
    <property type="entry name" value="UBIQUITIN-FOLD MODIFIER-CONJUGATING ENZYME 1"/>
    <property type="match status" value="1"/>
</dbReference>
<dbReference type="PANTHER" id="PTHR12921:SF0">
    <property type="entry name" value="UBIQUITIN-FOLD MODIFIER-CONJUGATING ENZYME 1"/>
    <property type="match status" value="1"/>
</dbReference>
<dbReference type="Pfam" id="PF08694">
    <property type="entry name" value="UFC1"/>
    <property type="match status" value="1"/>
</dbReference>
<dbReference type="PIRSF" id="PIRSF008716">
    <property type="entry name" value="DUF1782"/>
    <property type="match status" value="1"/>
</dbReference>
<dbReference type="SUPFAM" id="SSF54495">
    <property type="entry name" value="UBC-like"/>
    <property type="match status" value="1"/>
</dbReference>
<gene>
    <name type="ORF">Bm1_46190</name>
</gene>